<name>PME12_ARATH</name>
<comment type="function">
    <text evidence="1">Acts in the modification of cell walls via demethylesterification of cell wall pectin.</text>
</comment>
<comment type="catalytic activity">
    <reaction>
        <text>[(1-&gt;4)-alpha-D-galacturonosyl methyl ester](n) + n H2O = [(1-&gt;4)-alpha-D-galacturonosyl](n) + n methanol + n H(+)</text>
        <dbReference type="Rhea" id="RHEA:22380"/>
        <dbReference type="Rhea" id="RHEA-COMP:14570"/>
        <dbReference type="Rhea" id="RHEA-COMP:14573"/>
        <dbReference type="ChEBI" id="CHEBI:15377"/>
        <dbReference type="ChEBI" id="CHEBI:15378"/>
        <dbReference type="ChEBI" id="CHEBI:17790"/>
        <dbReference type="ChEBI" id="CHEBI:140522"/>
        <dbReference type="ChEBI" id="CHEBI:140523"/>
        <dbReference type="EC" id="3.1.1.11"/>
    </reaction>
</comment>
<comment type="pathway">
    <text>Glycan metabolism; pectin degradation; 2-dehydro-3-deoxy-D-gluconate from pectin: step 1/5.</text>
</comment>
<comment type="subcellular location">
    <subcellularLocation>
        <location evidence="1">Secreted</location>
        <location evidence="1">Cell wall</location>
    </subcellularLocation>
</comment>
<comment type="tissue specificity">
    <text evidence="4">Expressed in siliques.</text>
</comment>
<comment type="developmental stage">
    <text evidence="4">Expressed throughout silique development.</text>
</comment>
<comment type="miscellaneous">
    <text>The PMEI region may act as an autoinhibitory domain and prevent untimely PME activity during transport.</text>
</comment>
<comment type="similarity">
    <text evidence="5">In the N-terminal section; belongs to the PMEI family.</text>
</comment>
<comment type="similarity">
    <text evidence="5">In the C-terminal section; belongs to the pectinesterase family.</text>
</comment>
<comment type="sequence caution" evidence="5">
    <conflict type="erroneous initiation">
        <sequence resource="EMBL-CDS" id="BAD93990"/>
    </conflict>
</comment>
<gene>
    <name type="primary">PME12</name>
    <name type="synonym">ARATH12</name>
    <name type="ordered locus">At2g26440</name>
    <name type="ORF">T9J22.11</name>
</gene>
<feature type="signal peptide" evidence="2">
    <location>
        <begin position="1"/>
        <end position="23"/>
    </location>
</feature>
<feature type="chain" id="PRO_0000371669" description="Probable pectinesterase/pectinesterase inhibitor 12">
    <location>
        <begin position="24"/>
        <end position="547"/>
    </location>
</feature>
<feature type="region of interest" description="Pectinesterase inhibitor 12">
    <location>
        <begin position="31"/>
        <end position="185"/>
    </location>
</feature>
<feature type="region of interest" description="Pectinesterase 12">
    <location>
        <begin position="237"/>
        <end position="533"/>
    </location>
</feature>
<feature type="active site" description="Proton donor; for pectinesterase activity" evidence="3">
    <location>
        <position position="365"/>
    </location>
</feature>
<feature type="active site" description="Nucleophile; for pectinesterase activity" evidence="3">
    <location>
        <position position="386"/>
    </location>
</feature>
<feature type="binding site" evidence="1">
    <location>
        <position position="312"/>
    </location>
    <ligand>
        <name>substrate</name>
        <note>for pectinesterase activity</note>
    </ligand>
</feature>
<feature type="binding site" evidence="1">
    <location>
        <position position="342"/>
    </location>
    <ligand>
        <name>substrate</name>
        <note>for pectinesterase activity</note>
    </ligand>
</feature>
<feature type="binding site" evidence="1">
    <location>
        <position position="454"/>
    </location>
    <ligand>
        <name>substrate</name>
        <note>for pectinesterase activity</note>
    </ligand>
</feature>
<feature type="binding site" evidence="1">
    <location>
        <position position="456"/>
    </location>
    <ligand>
        <name>substrate</name>
        <note>for pectinesterase activity</note>
    </ligand>
</feature>
<feature type="site" description="Transition state stabilizer" evidence="1">
    <location>
        <position position="364"/>
    </location>
</feature>
<feature type="glycosylation site" description="N-linked (GlcNAc...) asparagine" evidence="2">
    <location>
        <position position="131"/>
    </location>
</feature>
<feature type="glycosylation site" description="N-linked (GlcNAc...) asparagine" evidence="2">
    <location>
        <position position="247"/>
    </location>
</feature>
<feature type="glycosylation site" description="N-linked (GlcNAc...) asparagine" evidence="2">
    <location>
        <position position="260"/>
    </location>
</feature>
<feature type="glycosylation site" description="N-linked (GlcNAc...) asparagine" evidence="2">
    <location>
        <position position="303"/>
    </location>
</feature>
<feature type="glycosylation site" description="N-linked (GlcNAc...) asparagine" evidence="2">
    <location>
        <position position="432"/>
    </location>
</feature>
<feature type="glycosylation site" description="N-linked (GlcNAc...) asparagine" evidence="2">
    <location>
        <position position="443"/>
    </location>
</feature>
<feature type="glycosylation site" description="N-linked (GlcNAc...) asparagine" evidence="2">
    <location>
        <position position="523"/>
    </location>
</feature>
<feature type="disulfide bond" evidence="1">
    <location>
        <begin position="379"/>
        <end position="399"/>
    </location>
</feature>
<proteinExistence type="evidence at transcript level"/>
<protein>
    <recommendedName>
        <fullName>Probable pectinesterase/pectinesterase inhibitor 12</fullName>
    </recommendedName>
    <domain>
        <recommendedName>
            <fullName>Pectinesterase inhibitor 12</fullName>
        </recommendedName>
        <alternativeName>
            <fullName>Pectin methylesterase inhibitor 12</fullName>
        </alternativeName>
    </domain>
    <domain>
        <recommendedName>
            <fullName>Pectinesterase 12</fullName>
            <shortName>PE 12</shortName>
            <ecNumber>3.1.1.11</ecNumber>
        </recommendedName>
        <alternativeName>
            <fullName>Pectin methylesterase 12</fullName>
            <shortName>AtPME12</shortName>
        </alternativeName>
    </domain>
</protein>
<organism>
    <name type="scientific">Arabidopsis thaliana</name>
    <name type="common">Mouse-ear cress</name>
    <dbReference type="NCBI Taxonomy" id="3702"/>
    <lineage>
        <taxon>Eukaryota</taxon>
        <taxon>Viridiplantae</taxon>
        <taxon>Streptophyta</taxon>
        <taxon>Embryophyta</taxon>
        <taxon>Tracheophyta</taxon>
        <taxon>Spermatophyta</taxon>
        <taxon>Magnoliopsida</taxon>
        <taxon>eudicotyledons</taxon>
        <taxon>Gunneridae</taxon>
        <taxon>Pentapetalae</taxon>
        <taxon>rosids</taxon>
        <taxon>malvids</taxon>
        <taxon>Brassicales</taxon>
        <taxon>Brassicaceae</taxon>
        <taxon>Camelineae</taxon>
        <taxon>Arabidopsis</taxon>
    </lineage>
</organism>
<accession>O48711</accession>
<accession>Q570D4</accession>
<dbReference type="EC" id="3.1.1.11"/>
<dbReference type="EMBL" id="AC002505">
    <property type="protein sequence ID" value="AAC14493.1"/>
    <property type="molecule type" value="Genomic_DNA"/>
</dbReference>
<dbReference type="EMBL" id="CP002685">
    <property type="protein sequence ID" value="AEC07839.1"/>
    <property type="molecule type" value="Genomic_DNA"/>
</dbReference>
<dbReference type="EMBL" id="AY072224">
    <property type="protein sequence ID" value="AAL60045.1"/>
    <property type="molecule type" value="mRNA"/>
</dbReference>
<dbReference type="EMBL" id="AY122952">
    <property type="protein sequence ID" value="AAM67485.1"/>
    <property type="molecule type" value="mRNA"/>
</dbReference>
<dbReference type="EMBL" id="AK220775">
    <property type="protein sequence ID" value="BAD93990.1"/>
    <property type="status" value="ALT_INIT"/>
    <property type="molecule type" value="mRNA"/>
</dbReference>
<dbReference type="PIR" id="T00977">
    <property type="entry name" value="T00977"/>
</dbReference>
<dbReference type="RefSeq" id="NP_180212.1">
    <property type="nucleotide sequence ID" value="NM_128201.5"/>
</dbReference>
<dbReference type="SMR" id="O48711"/>
<dbReference type="FunCoup" id="O48711">
    <property type="interactions" value="81"/>
</dbReference>
<dbReference type="STRING" id="3702.O48711"/>
<dbReference type="GlyCosmos" id="O48711">
    <property type="glycosylation" value="7 sites, No reported glycans"/>
</dbReference>
<dbReference type="GlyGen" id="O48711">
    <property type="glycosylation" value="7 sites"/>
</dbReference>
<dbReference type="iPTMnet" id="O48711"/>
<dbReference type="PaxDb" id="3702-AT2G26440.1"/>
<dbReference type="ProteomicsDB" id="236571"/>
<dbReference type="EnsemblPlants" id="AT2G26440.1">
    <property type="protein sequence ID" value="AT2G26440.1"/>
    <property type="gene ID" value="AT2G26440"/>
</dbReference>
<dbReference type="GeneID" id="817184"/>
<dbReference type="Gramene" id="AT2G26440.1">
    <property type="protein sequence ID" value="AT2G26440.1"/>
    <property type="gene ID" value="AT2G26440"/>
</dbReference>
<dbReference type="KEGG" id="ath:AT2G26440"/>
<dbReference type="Araport" id="AT2G26440"/>
<dbReference type="TAIR" id="AT2G26440">
    <property type="gene designation" value="PME12"/>
</dbReference>
<dbReference type="eggNOG" id="ENOG502R64Q">
    <property type="taxonomic scope" value="Eukaryota"/>
</dbReference>
<dbReference type="HOGENOM" id="CLU_012243_9_1_1"/>
<dbReference type="InParanoid" id="O48711"/>
<dbReference type="OMA" id="FITGQEW"/>
<dbReference type="PhylomeDB" id="O48711"/>
<dbReference type="BioCyc" id="ARA:AT2G26440-MONOMER"/>
<dbReference type="UniPathway" id="UPA00545">
    <property type="reaction ID" value="UER00823"/>
</dbReference>
<dbReference type="PRO" id="PR:O48711"/>
<dbReference type="Proteomes" id="UP000006548">
    <property type="component" value="Chromosome 2"/>
</dbReference>
<dbReference type="ExpressionAtlas" id="O48711">
    <property type="expression patterns" value="baseline and differential"/>
</dbReference>
<dbReference type="GO" id="GO:0005576">
    <property type="term" value="C:extracellular region"/>
    <property type="evidence" value="ECO:0007669"/>
    <property type="project" value="UniProtKB-KW"/>
</dbReference>
<dbReference type="GO" id="GO:0004857">
    <property type="term" value="F:enzyme inhibitor activity"/>
    <property type="evidence" value="ECO:0007669"/>
    <property type="project" value="InterPro"/>
</dbReference>
<dbReference type="GO" id="GO:0030599">
    <property type="term" value="F:pectinesterase activity"/>
    <property type="evidence" value="ECO:0007669"/>
    <property type="project" value="UniProtKB-EC"/>
</dbReference>
<dbReference type="GO" id="GO:0042545">
    <property type="term" value="P:cell wall modification"/>
    <property type="evidence" value="ECO:0007669"/>
    <property type="project" value="InterPro"/>
</dbReference>
<dbReference type="GO" id="GO:0045490">
    <property type="term" value="P:pectin catabolic process"/>
    <property type="evidence" value="ECO:0007669"/>
    <property type="project" value="UniProtKB-UniPathway"/>
</dbReference>
<dbReference type="GO" id="GO:0009617">
    <property type="term" value="P:response to bacterium"/>
    <property type="evidence" value="ECO:0000270"/>
    <property type="project" value="TAIR"/>
</dbReference>
<dbReference type="CDD" id="cd15798">
    <property type="entry name" value="PMEI-like_3"/>
    <property type="match status" value="1"/>
</dbReference>
<dbReference type="FunFam" id="1.20.140.40:FF:000022">
    <property type="entry name" value="Pectinesterase"/>
    <property type="match status" value="1"/>
</dbReference>
<dbReference type="FunFam" id="2.160.20.10:FF:000001">
    <property type="entry name" value="Pectinesterase"/>
    <property type="match status" value="1"/>
</dbReference>
<dbReference type="Gene3D" id="1.20.140.40">
    <property type="entry name" value="Invertase/pectin methylesterase inhibitor family protein"/>
    <property type="match status" value="1"/>
</dbReference>
<dbReference type="Gene3D" id="2.160.20.10">
    <property type="entry name" value="Single-stranded right-handed beta-helix, Pectin lyase-like"/>
    <property type="match status" value="1"/>
</dbReference>
<dbReference type="InterPro" id="IPR035513">
    <property type="entry name" value="Invertase/methylesterase_inhib"/>
</dbReference>
<dbReference type="InterPro" id="IPR012334">
    <property type="entry name" value="Pectin_lyas_fold"/>
</dbReference>
<dbReference type="InterPro" id="IPR011050">
    <property type="entry name" value="Pectin_lyase_fold/virulence"/>
</dbReference>
<dbReference type="InterPro" id="IPR033131">
    <property type="entry name" value="Pectinesterase_Asp_AS"/>
</dbReference>
<dbReference type="InterPro" id="IPR000070">
    <property type="entry name" value="Pectinesterase_cat"/>
</dbReference>
<dbReference type="InterPro" id="IPR006501">
    <property type="entry name" value="Pectinesterase_inhib_dom"/>
</dbReference>
<dbReference type="InterPro" id="IPR018040">
    <property type="entry name" value="Pectinesterase_Tyr_AS"/>
</dbReference>
<dbReference type="NCBIfam" id="TIGR01614">
    <property type="entry name" value="PME_inhib"/>
    <property type="match status" value="1"/>
</dbReference>
<dbReference type="PANTHER" id="PTHR31707">
    <property type="entry name" value="PECTINESTERASE"/>
    <property type="match status" value="1"/>
</dbReference>
<dbReference type="Pfam" id="PF01095">
    <property type="entry name" value="Pectinesterase"/>
    <property type="match status" value="1"/>
</dbReference>
<dbReference type="Pfam" id="PF04043">
    <property type="entry name" value="PMEI"/>
    <property type="match status" value="1"/>
</dbReference>
<dbReference type="SMART" id="SM00856">
    <property type="entry name" value="PMEI"/>
    <property type="match status" value="1"/>
</dbReference>
<dbReference type="SUPFAM" id="SSF51126">
    <property type="entry name" value="Pectin lyase-like"/>
    <property type="match status" value="1"/>
</dbReference>
<dbReference type="SUPFAM" id="SSF101148">
    <property type="entry name" value="Plant invertase/pectin methylesterase inhibitor"/>
    <property type="match status" value="1"/>
</dbReference>
<dbReference type="PROSITE" id="PS00800">
    <property type="entry name" value="PECTINESTERASE_1"/>
    <property type="match status" value="1"/>
</dbReference>
<dbReference type="PROSITE" id="PS00503">
    <property type="entry name" value="PECTINESTERASE_2"/>
    <property type="match status" value="1"/>
</dbReference>
<reference key="1">
    <citation type="journal article" date="1999" name="Nature">
        <title>Sequence and analysis of chromosome 2 of the plant Arabidopsis thaliana.</title>
        <authorList>
            <person name="Lin X."/>
            <person name="Kaul S."/>
            <person name="Rounsley S.D."/>
            <person name="Shea T.P."/>
            <person name="Benito M.-I."/>
            <person name="Town C.D."/>
            <person name="Fujii C.Y."/>
            <person name="Mason T.M."/>
            <person name="Bowman C.L."/>
            <person name="Barnstead M.E."/>
            <person name="Feldblyum T.V."/>
            <person name="Buell C.R."/>
            <person name="Ketchum K.A."/>
            <person name="Lee J.J."/>
            <person name="Ronning C.M."/>
            <person name="Koo H.L."/>
            <person name="Moffat K.S."/>
            <person name="Cronin L.A."/>
            <person name="Shen M."/>
            <person name="Pai G."/>
            <person name="Van Aken S."/>
            <person name="Umayam L."/>
            <person name="Tallon L.J."/>
            <person name="Gill J.E."/>
            <person name="Adams M.D."/>
            <person name="Carrera A.J."/>
            <person name="Creasy T.H."/>
            <person name="Goodman H.M."/>
            <person name="Somerville C.R."/>
            <person name="Copenhaver G.P."/>
            <person name="Preuss D."/>
            <person name="Nierman W.C."/>
            <person name="White O."/>
            <person name="Eisen J.A."/>
            <person name="Salzberg S.L."/>
            <person name="Fraser C.M."/>
            <person name="Venter J.C."/>
        </authorList>
    </citation>
    <scope>NUCLEOTIDE SEQUENCE [LARGE SCALE GENOMIC DNA]</scope>
    <source>
        <strain>cv. Columbia</strain>
    </source>
</reference>
<reference key="2">
    <citation type="journal article" date="2017" name="Plant J.">
        <title>Araport11: a complete reannotation of the Arabidopsis thaliana reference genome.</title>
        <authorList>
            <person name="Cheng C.Y."/>
            <person name="Krishnakumar V."/>
            <person name="Chan A.P."/>
            <person name="Thibaud-Nissen F."/>
            <person name="Schobel S."/>
            <person name="Town C.D."/>
        </authorList>
    </citation>
    <scope>GENOME REANNOTATION</scope>
    <source>
        <strain>cv. Columbia</strain>
    </source>
</reference>
<reference key="3">
    <citation type="journal article" date="2003" name="Science">
        <title>Empirical analysis of transcriptional activity in the Arabidopsis genome.</title>
        <authorList>
            <person name="Yamada K."/>
            <person name="Lim J."/>
            <person name="Dale J.M."/>
            <person name="Chen H."/>
            <person name="Shinn P."/>
            <person name="Palm C.J."/>
            <person name="Southwick A.M."/>
            <person name="Wu H.C."/>
            <person name="Kim C.J."/>
            <person name="Nguyen M."/>
            <person name="Pham P.K."/>
            <person name="Cheuk R.F."/>
            <person name="Karlin-Newmann G."/>
            <person name="Liu S.X."/>
            <person name="Lam B."/>
            <person name="Sakano H."/>
            <person name="Wu T."/>
            <person name="Yu G."/>
            <person name="Miranda M."/>
            <person name="Quach H.L."/>
            <person name="Tripp M."/>
            <person name="Chang C.H."/>
            <person name="Lee J.M."/>
            <person name="Toriumi M.J."/>
            <person name="Chan M.M."/>
            <person name="Tang C.C."/>
            <person name="Onodera C.S."/>
            <person name="Deng J.M."/>
            <person name="Akiyama K."/>
            <person name="Ansari Y."/>
            <person name="Arakawa T."/>
            <person name="Banh J."/>
            <person name="Banno F."/>
            <person name="Bowser L."/>
            <person name="Brooks S.Y."/>
            <person name="Carninci P."/>
            <person name="Chao Q."/>
            <person name="Choy N."/>
            <person name="Enju A."/>
            <person name="Goldsmith A.D."/>
            <person name="Gurjal M."/>
            <person name="Hansen N.F."/>
            <person name="Hayashizaki Y."/>
            <person name="Johnson-Hopson C."/>
            <person name="Hsuan V.W."/>
            <person name="Iida K."/>
            <person name="Karnes M."/>
            <person name="Khan S."/>
            <person name="Koesema E."/>
            <person name="Ishida J."/>
            <person name="Jiang P.X."/>
            <person name="Jones T."/>
            <person name="Kawai J."/>
            <person name="Kamiya A."/>
            <person name="Meyers C."/>
            <person name="Nakajima M."/>
            <person name="Narusaka M."/>
            <person name="Seki M."/>
            <person name="Sakurai T."/>
            <person name="Satou M."/>
            <person name="Tamse R."/>
            <person name="Vaysberg M."/>
            <person name="Wallender E.K."/>
            <person name="Wong C."/>
            <person name="Yamamura Y."/>
            <person name="Yuan S."/>
            <person name="Shinozaki K."/>
            <person name="Davis R.W."/>
            <person name="Theologis A."/>
            <person name="Ecker J.R."/>
        </authorList>
    </citation>
    <scope>NUCLEOTIDE SEQUENCE [LARGE SCALE MRNA]</scope>
    <source>
        <strain>cv. Columbia</strain>
    </source>
</reference>
<reference key="4">
    <citation type="submission" date="2005-03" db="EMBL/GenBank/DDBJ databases">
        <title>Large-scale analysis of RIKEN Arabidopsis full-length (RAFL) cDNAs.</title>
        <authorList>
            <person name="Totoki Y."/>
            <person name="Seki M."/>
            <person name="Ishida J."/>
            <person name="Nakajima M."/>
            <person name="Enju A."/>
            <person name="Kamiya A."/>
            <person name="Narusaka M."/>
            <person name="Shin-i T."/>
            <person name="Nakagawa M."/>
            <person name="Sakamoto N."/>
            <person name="Oishi K."/>
            <person name="Kohara Y."/>
            <person name="Kobayashi M."/>
            <person name="Toyoda A."/>
            <person name="Sakaki Y."/>
            <person name="Sakurai T."/>
            <person name="Iida K."/>
            <person name="Akiyama K."/>
            <person name="Satou M."/>
            <person name="Toyoda T."/>
            <person name="Konagaya A."/>
            <person name="Carninci P."/>
            <person name="Kawai J."/>
            <person name="Hayashizaki Y."/>
            <person name="Shinozaki K."/>
        </authorList>
    </citation>
    <scope>NUCLEOTIDE SEQUENCE [LARGE SCALE MRNA] OF 447-547</scope>
    <source>
        <strain>cv. Columbia</strain>
    </source>
</reference>
<reference key="5">
    <citation type="journal article" date="2004" name="Carbohydr. Res.">
        <title>Pectin methylesterases: sequence-structural features and phylogenetic relationships.</title>
        <authorList>
            <person name="Markovic O."/>
            <person name="Janecek S."/>
        </authorList>
    </citation>
    <scope>GENE FAMILY</scope>
    <scope>NOMENCLATURE</scope>
</reference>
<reference key="6">
    <citation type="journal article" date="2006" name="Planta">
        <title>Comprehensive expression profiling of the pectin methylesterase gene family during silique development in Arabidopsis thaliana.</title>
        <authorList>
            <person name="Louvet R."/>
            <person name="Cavel E."/>
            <person name="Gutierrez L."/>
            <person name="Guenin S."/>
            <person name="Roger D."/>
            <person name="Gillet F."/>
            <person name="Guerineau F."/>
            <person name="Pelloux J."/>
        </authorList>
    </citation>
    <scope>TISSUE SPECIFICITY</scope>
    <scope>DEVELOPMENTAL STAGE</scope>
</reference>
<keyword id="KW-0063">Aspartyl esterase</keyword>
<keyword id="KW-0134">Cell wall</keyword>
<keyword id="KW-0961">Cell wall biogenesis/degradation</keyword>
<keyword id="KW-1015">Disulfide bond</keyword>
<keyword id="KW-0325">Glycoprotein</keyword>
<keyword id="KW-0378">Hydrolase</keyword>
<keyword id="KW-1185">Reference proteome</keyword>
<keyword id="KW-0964">Secreted</keyword>
<keyword id="KW-0732">Signal</keyword>
<evidence type="ECO:0000250" key="1"/>
<evidence type="ECO:0000255" key="2"/>
<evidence type="ECO:0000255" key="3">
    <source>
        <dbReference type="PROSITE-ProRule" id="PRU10040"/>
    </source>
</evidence>
<evidence type="ECO:0000269" key="4">
    <source>
    </source>
</evidence>
<evidence type="ECO:0000305" key="5"/>
<sequence>MALSSFNLSSLLFLLFFTPSVFSYSYQPSLNPHETSATSFCKNTPYPDACFTSLKLSISINISPNILSFLLQTLQTALSEAGKLTDLLSGAGVSNNLVEGQRGSLQDCKDLHHITSSFLKRSISKIQDGVNDSRKLADARAYLSAALTNKITCLEGLESASGPLKPKLVTSFTTTYKHISNSLSALPKQRRTTNPKTGGNTKNRRLLGLFPDWVYKKDHRFLEDSSDGYDEYDPSESLVVAADGTGNFSTINEAISFAPNMSNDRVLIYVKEGVYDENIDIPIYKTNIVLIGDGSDVTFITGNRSVGDGWTTFRSATLAVSGEGFLARDIMITNTAGPEKHQAVALRVNADFVALYRCVIDGYQDTLYTHSFRQFYRECDIYGTIDYIFGNAAVVFQGCNIVSKLPMPGQFTVITAQSRDTQDEDTGISMQNCSILASEDLFNSSNKVKSYLGRPWREFSRTVVMESYIDEFIDGSGWSKWNGGEALDTLYYGEYNNNGPGSETVKRVNWPGFHIMGYEDAFNFTATEFITGDGWLGSTSFPYDNGI</sequence>